<proteinExistence type="predicted"/>
<organism>
    <name type="scientific">Dictyostelium discoideum</name>
    <name type="common">Social amoeba</name>
    <dbReference type="NCBI Taxonomy" id="44689"/>
    <lineage>
        <taxon>Eukaryota</taxon>
        <taxon>Amoebozoa</taxon>
        <taxon>Evosea</taxon>
        <taxon>Eumycetozoa</taxon>
        <taxon>Dictyostelia</taxon>
        <taxon>Dictyosteliales</taxon>
        <taxon>Dictyosteliaceae</taxon>
        <taxon>Dictyostelium</taxon>
    </lineage>
</organism>
<feature type="chain" id="PRO_0000363158" description="Arrestin domain-containing protein E">
    <location>
        <begin position="1"/>
        <end position="564"/>
    </location>
</feature>
<feature type="domain" description="LIM zinc-binding" evidence="1">
    <location>
        <begin position="348"/>
        <end position="413"/>
    </location>
</feature>
<feature type="region of interest" description="Disordered" evidence="2">
    <location>
        <begin position="74"/>
        <end position="150"/>
    </location>
</feature>
<feature type="region of interest" description="Disordered" evidence="2">
    <location>
        <begin position="245"/>
        <end position="286"/>
    </location>
</feature>
<feature type="compositionally biased region" description="Low complexity" evidence="2">
    <location>
        <begin position="74"/>
        <end position="146"/>
    </location>
</feature>
<feature type="compositionally biased region" description="Pro residues" evidence="2">
    <location>
        <begin position="250"/>
        <end position="259"/>
    </location>
</feature>
<feature type="compositionally biased region" description="Low complexity" evidence="2">
    <location>
        <begin position="260"/>
        <end position="269"/>
    </location>
</feature>
<feature type="compositionally biased region" description="Polar residues" evidence="2">
    <location>
        <begin position="270"/>
        <end position="285"/>
    </location>
</feature>
<evidence type="ECO:0000255" key="1">
    <source>
        <dbReference type="PROSITE-ProRule" id="PRU00125"/>
    </source>
</evidence>
<evidence type="ECO:0000256" key="2">
    <source>
        <dbReference type="SAM" id="MobiDB-lite"/>
    </source>
</evidence>
<accession>Q55GN8</accession>
<dbReference type="EMBL" id="AAFI02000003">
    <property type="protein sequence ID" value="EAL73245.1"/>
    <property type="molecule type" value="Genomic_DNA"/>
</dbReference>
<dbReference type="RefSeq" id="XP_647146.1">
    <property type="nucleotide sequence ID" value="XM_642054.1"/>
</dbReference>
<dbReference type="SMR" id="Q55GN8"/>
<dbReference type="FunCoup" id="Q55GN8">
    <property type="interactions" value="26"/>
</dbReference>
<dbReference type="STRING" id="44689.Q55GN8"/>
<dbReference type="PaxDb" id="44689-DDB0267093"/>
<dbReference type="EnsemblProtists" id="EAL73245">
    <property type="protein sequence ID" value="EAL73245"/>
    <property type="gene ID" value="DDB_G0267584"/>
</dbReference>
<dbReference type="GeneID" id="8615949"/>
<dbReference type="KEGG" id="ddi:DDB_G0267584"/>
<dbReference type="dictyBase" id="DDB_G0267584">
    <property type="gene designation" value="adcE"/>
</dbReference>
<dbReference type="VEuPathDB" id="AmoebaDB:DDB_G0267584"/>
<dbReference type="eggNOG" id="ENOG502SBW6">
    <property type="taxonomic scope" value="Eukaryota"/>
</dbReference>
<dbReference type="HOGENOM" id="CLU_483515_0_0_1"/>
<dbReference type="InParanoid" id="Q55GN8"/>
<dbReference type="OMA" id="FEGDFFY"/>
<dbReference type="PRO" id="PR:Q55GN8"/>
<dbReference type="Proteomes" id="UP000002195">
    <property type="component" value="Chromosome 1"/>
</dbReference>
<dbReference type="GO" id="GO:0046872">
    <property type="term" value="F:metal ion binding"/>
    <property type="evidence" value="ECO:0007669"/>
    <property type="project" value="UniProtKB-KW"/>
</dbReference>
<dbReference type="CDD" id="cd02656">
    <property type="entry name" value="MIT"/>
    <property type="match status" value="2"/>
</dbReference>
<dbReference type="Gene3D" id="2.60.40.640">
    <property type="match status" value="1"/>
</dbReference>
<dbReference type="Gene3D" id="2.10.110.10">
    <property type="entry name" value="Cysteine Rich Protein"/>
    <property type="match status" value="1"/>
</dbReference>
<dbReference type="Gene3D" id="1.20.58.80">
    <property type="entry name" value="Phosphotransferase system, lactose/cellobiose-type IIA subunit"/>
    <property type="match status" value="2"/>
</dbReference>
<dbReference type="InterPro" id="IPR014752">
    <property type="entry name" value="Arrestin-like_C"/>
</dbReference>
<dbReference type="InterPro" id="IPR011022">
    <property type="entry name" value="Arrestin_C-like"/>
</dbReference>
<dbReference type="InterPro" id="IPR014756">
    <property type="entry name" value="Ig_E-set"/>
</dbReference>
<dbReference type="InterPro" id="IPR007330">
    <property type="entry name" value="MIT_dom"/>
</dbReference>
<dbReference type="InterPro" id="IPR036181">
    <property type="entry name" value="MIT_dom_sf"/>
</dbReference>
<dbReference type="InterPro" id="IPR001781">
    <property type="entry name" value="Znf_LIM"/>
</dbReference>
<dbReference type="Pfam" id="PF02752">
    <property type="entry name" value="Arrestin_C"/>
    <property type="match status" value="1"/>
</dbReference>
<dbReference type="Pfam" id="PF00412">
    <property type="entry name" value="LIM"/>
    <property type="match status" value="1"/>
</dbReference>
<dbReference type="Pfam" id="PF04212">
    <property type="entry name" value="MIT"/>
    <property type="match status" value="2"/>
</dbReference>
<dbReference type="SMART" id="SM01017">
    <property type="entry name" value="Arrestin_C"/>
    <property type="match status" value="1"/>
</dbReference>
<dbReference type="SMART" id="SM00132">
    <property type="entry name" value="LIM"/>
    <property type="match status" value="1"/>
</dbReference>
<dbReference type="SMART" id="SM00745">
    <property type="entry name" value="MIT"/>
    <property type="match status" value="2"/>
</dbReference>
<dbReference type="SUPFAM" id="SSF81296">
    <property type="entry name" value="E set domains"/>
    <property type="match status" value="1"/>
</dbReference>
<dbReference type="SUPFAM" id="SSF57716">
    <property type="entry name" value="Glucocorticoid receptor-like (DNA-binding domain)"/>
    <property type="match status" value="1"/>
</dbReference>
<dbReference type="SUPFAM" id="SSF116846">
    <property type="entry name" value="MIT domain"/>
    <property type="match status" value="2"/>
</dbReference>
<dbReference type="PROSITE" id="PS50023">
    <property type="entry name" value="LIM_DOMAIN_2"/>
    <property type="match status" value="1"/>
</dbReference>
<protein>
    <recommendedName>
        <fullName>Arrestin domain-containing protein E</fullName>
    </recommendedName>
</protein>
<gene>
    <name type="primary">adcE</name>
    <name type="ORF">DDB_G0267584</name>
</gene>
<reference key="1">
    <citation type="journal article" date="2005" name="Nature">
        <title>The genome of the social amoeba Dictyostelium discoideum.</title>
        <authorList>
            <person name="Eichinger L."/>
            <person name="Pachebat J.A."/>
            <person name="Gloeckner G."/>
            <person name="Rajandream M.A."/>
            <person name="Sucgang R."/>
            <person name="Berriman M."/>
            <person name="Song J."/>
            <person name="Olsen R."/>
            <person name="Szafranski K."/>
            <person name="Xu Q."/>
            <person name="Tunggal B."/>
            <person name="Kummerfeld S."/>
            <person name="Madera M."/>
            <person name="Konfortov B.A."/>
            <person name="Rivero F."/>
            <person name="Bankier A.T."/>
            <person name="Lehmann R."/>
            <person name="Hamlin N."/>
            <person name="Davies R."/>
            <person name="Gaudet P."/>
            <person name="Fey P."/>
            <person name="Pilcher K."/>
            <person name="Chen G."/>
            <person name="Saunders D."/>
            <person name="Sodergren E.J."/>
            <person name="Davis P."/>
            <person name="Kerhornou A."/>
            <person name="Nie X."/>
            <person name="Hall N."/>
            <person name="Anjard C."/>
            <person name="Hemphill L."/>
            <person name="Bason N."/>
            <person name="Farbrother P."/>
            <person name="Desany B."/>
            <person name="Just E."/>
            <person name="Morio T."/>
            <person name="Rost R."/>
            <person name="Churcher C.M."/>
            <person name="Cooper J."/>
            <person name="Haydock S."/>
            <person name="van Driessche N."/>
            <person name="Cronin A."/>
            <person name="Goodhead I."/>
            <person name="Muzny D.M."/>
            <person name="Mourier T."/>
            <person name="Pain A."/>
            <person name="Lu M."/>
            <person name="Harper D."/>
            <person name="Lindsay R."/>
            <person name="Hauser H."/>
            <person name="James K.D."/>
            <person name="Quiles M."/>
            <person name="Madan Babu M."/>
            <person name="Saito T."/>
            <person name="Buchrieser C."/>
            <person name="Wardroper A."/>
            <person name="Felder M."/>
            <person name="Thangavelu M."/>
            <person name="Johnson D."/>
            <person name="Knights A."/>
            <person name="Loulseged H."/>
            <person name="Mungall K.L."/>
            <person name="Oliver K."/>
            <person name="Price C."/>
            <person name="Quail M.A."/>
            <person name="Urushihara H."/>
            <person name="Hernandez J."/>
            <person name="Rabbinowitsch E."/>
            <person name="Steffen D."/>
            <person name="Sanders M."/>
            <person name="Ma J."/>
            <person name="Kohara Y."/>
            <person name="Sharp S."/>
            <person name="Simmonds M.N."/>
            <person name="Spiegler S."/>
            <person name="Tivey A."/>
            <person name="Sugano S."/>
            <person name="White B."/>
            <person name="Walker D."/>
            <person name="Woodward J.R."/>
            <person name="Winckler T."/>
            <person name="Tanaka Y."/>
            <person name="Shaulsky G."/>
            <person name="Schleicher M."/>
            <person name="Weinstock G.M."/>
            <person name="Rosenthal A."/>
            <person name="Cox E.C."/>
            <person name="Chisholm R.L."/>
            <person name="Gibbs R.A."/>
            <person name="Loomis W.F."/>
            <person name="Platzer M."/>
            <person name="Kay R.R."/>
            <person name="Williams J.G."/>
            <person name="Dear P.H."/>
            <person name="Noegel A.A."/>
            <person name="Barrell B.G."/>
            <person name="Kuspa A."/>
        </authorList>
    </citation>
    <scope>NUCLEOTIDE SEQUENCE [LARGE SCALE GENOMIC DNA]</scope>
    <source>
        <strain>AX4</strain>
    </source>
</reference>
<keyword id="KW-0440">LIM domain</keyword>
<keyword id="KW-0479">Metal-binding</keyword>
<keyword id="KW-1185">Reference proteome</keyword>
<keyword id="KW-0862">Zinc</keyword>
<name>ADCE_DICDI</name>
<sequence length="564" mass="63571">MSSEILQTGLQLVKSAIDADNQKNYSLACNLYDQAVLNLKLALVAEREPSKNALISSKIEEYSQRNKFIKNLLSQQPQSSQPSQPQQSQFSFPSVPSSISPSINQQQQQQQQQINNNNNSILSSFPSAGNTNNNNNNTSNGFSPPNLNKNEQLSKLNSLSIGNNQSTNRQLSRVEAYEAAKNFSLKGRKEEEVKNYRGASQCYEEACNYYLMAIKSEPDPTLKKNLSDEAKIYLDRIEVLKPFAASQPQPQQPQQPQPQQPQQQQFQQQSYNNNNSTQSMLSSFPSFNGSTNSLNNSLNNSNNNFNQILTNSNMPIAQQNFLQNHQFNQSNNSFNNATSSLPLTFSGDKCAACDALLSTNSIKALDRNWHAECFQVSIICAGCQKPFALSNLSLKVKDNRAYHPMCFESTTGLSQEEIRTFVGSSKQLFFSIQLQRKFYRAGETIQFGFTIDNGTTKKVEKVVAYLLMTETRMEITGTAYERKPKRTIKKLGRCEFHHSNRFPLIKDRFEGDFFYSIPPNILPSEVTGVDASFVREYQLIVKCVGPPLKIMTVKLKFNLTILDK</sequence>